<organism>
    <name type="scientific">Danio rerio</name>
    <name type="common">Zebrafish</name>
    <name type="synonym">Brachydanio rerio</name>
    <dbReference type="NCBI Taxonomy" id="7955"/>
    <lineage>
        <taxon>Eukaryota</taxon>
        <taxon>Metazoa</taxon>
        <taxon>Chordata</taxon>
        <taxon>Craniata</taxon>
        <taxon>Vertebrata</taxon>
        <taxon>Euteleostomi</taxon>
        <taxon>Actinopterygii</taxon>
        <taxon>Neopterygii</taxon>
        <taxon>Teleostei</taxon>
        <taxon>Ostariophysi</taxon>
        <taxon>Cypriniformes</taxon>
        <taxon>Danionidae</taxon>
        <taxon>Danioninae</taxon>
        <taxon>Danio</taxon>
    </lineage>
</organism>
<sequence length="175" mass="20612">MRCVKALQLTLAVIKPDAMAHPLILEALHQKILENFIIIRKKDLIWRKADSEMFYAEHSGRFFFQRLVEFMSSGPMRAYILAREDAITHWRTMMGPTKVFRARFSSPETLRGKYGLTDTRNTTHGSDSIESAKREISFFFPEFSAEEWMMREEPHFRLGHTEYNEESQIHTVKHT</sequence>
<dbReference type="EC" id="2.7.4.6"/>
<dbReference type="EMBL" id="BX276101">
    <property type="protein sequence ID" value="CAI11539.1"/>
    <property type="molecule type" value="Genomic_DNA"/>
</dbReference>
<dbReference type="EMBL" id="BC075738">
    <property type="protein sequence ID" value="AAH75738.1"/>
    <property type="molecule type" value="mRNA"/>
</dbReference>
<dbReference type="RefSeq" id="NP_571672.2">
    <property type="nucleotide sequence ID" value="NM_131597.2"/>
</dbReference>
<dbReference type="SMR" id="Q6DI51"/>
<dbReference type="FunCoup" id="Q6DI51">
    <property type="interactions" value="821"/>
</dbReference>
<dbReference type="STRING" id="7955.ENSDARP00000094574"/>
<dbReference type="PaxDb" id="7955-ENSDARP00000094574"/>
<dbReference type="Ensembl" id="ENSDART00000103798">
    <property type="protein sequence ID" value="ENSDARP00000094574"/>
    <property type="gene ID" value="ENSDARG00000016138"/>
</dbReference>
<dbReference type="GeneID" id="58120"/>
<dbReference type="KEGG" id="dre:58120"/>
<dbReference type="AGR" id="ZFIN:ZDB-GENE-000710-3"/>
<dbReference type="CTD" id="10201"/>
<dbReference type="ZFIN" id="ZDB-GENE-000710-3">
    <property type="gene designation" value="nme6"/>
</dbReference>
<dbReference type="eggNOG" id="KOG0888">
    <property type="taxonomic scope" value="Eukaryota"/>
</dbReference>
<dbReference type="HOGENOM" id="CLU_060216_8_0_1"/>
<dbReference type="InParanoid" id="Q6DI51"/>
<dbReference type="OMA" id="WRKEECQ"/>
<dbReference type="OrthoDB" id="25346at2759"/>
<dbReference type="PhylomeDB" id="Q6DI51"/>
<dbReference type="TreeFam" id="TF354225"/>
<dbReference type="PRO" id="PR:Q6DI51"/>
<dbReference type="Proteomes" id="UP000000437">
    <property type="component" value="Chromosome 20"/>
</dbReference>
<dbReference type="Bgee" id="ENSDARG00000016138">
    <property type="expression patterns" value="Expressed in muscle tissue and 25 other cell types or tissues"/>
</dbReference>
<dbReference type="GO" id="GO:0005739">
    <property type="term" value="C:mitochondrion"/>
    <property type="evidence" value="ECO:0000318"/>
    <property type="project" value="GO_Central"/>
</dbReference>
<dbReference type="GO" id="GO:0005524">
    <property type="term" value="F:ATP binding"/>
    <property type="evidence" value="ECO:0007669"/>
    <property type="project" value="UniProtKB-KW"/>
</dbReference>
<dbReference type="GO" id="GO:0046872">
    <property type="term" value="F:metal ion binding"/>
    <property type="evidence" value="ECO:0007669"/>
    <property type="project" value="UniProtKB-KW"/>
</dbReference>
<dbReference type="GO" id="GO:0004550">
    <property type="term" value="F:nucleoside diphosphate kinase activity"/>
    <property type="evidence" value="ECO:0000318"/>
    <property type="project" value="GO_Central"/>
</dbReference>
<dbReference type="GO" id="GO:0006241">
    <property type="term" value="P:CTP biosynthetic process"/>
    <property type="evidence" value="ECO:0007669"/>
    <property type="project" value="InterPro"/>
</dbReference>
<dbReference type="GO" id="GO:0006183">
    <property type="term" value="P:GTP biosynthetic process"/>
    <property type="evidence" value="ECO:0007669"/>
    <property type="project" value="InterPro"/>
</dbReference>
<dbReference type="GO" id="GO:0030308">
    <property type="term" value="P:negative regulation of cell growth"/>
    <property type="evidence" value="ECO:0000318"/>
    <property type="project" value="GO_Central"/>
</dbReference>
<dbReference type="GO" id="GO:0045839">
    <property type="term" value="P:negative regulation of mitotic nuclear division"/>
    <property type="evidence" value="ECO:0000318"/>
    <property type="project" value="GO_Central"/>
</dbReference>
<dbReference type="GO" id="GO:0006228">
    <property type="term" value="P:UTP biosynthetic process"/>
    <property type="evidence" value="ECO:0007669"/>
    <property type="project" value="InterPro"/>
</dbReference>
<dbReference type="CDD" id="cd04414">
    <property type="entry name" value="NDPk6"/>
    <property type="match status" value="1"/>
</dbReference>
<dbReference type="FunFam" id="3.30.70.141:FF:000006">
    <property type="entry name" value="Nucleoside diphosphate kinase"/>
    <property type="match status" value="1"/>
</dbReference>
<dbReference type="Gene3D" id="3.30.70.141">
    <property type="entry name" value="Nucleoside diphosphate kinase-like domain"/>
    <property type="match status" value="1"/>
</dbReference>
<dbReference type="InterPro" id="IPR034907">
    <property type="entry name" value="NDK-like_dom"/>
</dbReference>
<dbReference type="InterPro" id="IPR036850">
    <property type="entry name" value="NDK-like_dom_sf"/>
</dbReference>
<dbReference type="InterPro" id="IPR037994">
    <property type="entry name" value="NDPk6"/>
</dbReference>
<dbReference type="InterPro" id="IPR001564">
    <property type="entry name" value="Nucleoside_diP_kinase"/>
</dbReference>
<dbReference type="InterPro" id="IPR023005">
    <property type="entry name" value="Nucleoside_diP_kinase_AS"/>
</dbReference>
<dbReference type="PANTHER" id="PTHR46956">
    <property type="entry name" value="NUCLEOSIDE DIPHOSPHATE KINASE 6"/>
    <property type="match status" value="1"/>
</dbReference>
<dbReference type="PANTHER" id="PTHR46956:SF1">
    <property type="entry name" value="NUCLEOSIDE DIPHOSPHATE KINASE 6"/>
    <property type="match status" value="1"/>
</dbReference>
<dbReference type="Pfam" id="PF00334">
    <property type="entry name" value="NDK"/>
    <property type="match status" value="1"/>
</dbReference>
<dbReference type="PRINTS" id="PR01243">
    <property type="entry name" value="NUCDPKINASE"/>
</dbReference>
<dbReference type="SMART" id="SM00562">
    <property type="entry name" value="NDK"/>
    <property type="match status" value="1"/>
</dbReference>
<dbReference type="SUPFAM" id="SSF54919">
    <property type="entry name" value="Nucleoside diphosphate kinase, NDK"/>
    <property type="match status" value="1"/>
</dbReference>
<dbReference type="PROSITE" id="PS00469">
    <property type="entry name" value="NDPK"/>
    <property type="match status" value="1"/>
</dbReference>
<dbReference type="PROSITE" id="PS51374">
    <property type="entry name" value="NDPK_LIKE"/>
    <property type="match status" value="1"/>
</dbReference>
<gene>
    <name type="primary">nme6</name>
    <name type="synonym">ndpkz6</name>
</gene>
<keyword id="KW-0067">ATP-binding</keyword>
<keyword id="KW-0418">Kinase</keyword>
<keyword id="KW-0460">Magnesium</keyword>
<keyword id="KW-0479">Metal-binding</keyword>
<keyword id="KW-0546">Nucleotide metabolism</keyword>
<keyword id="KW-0547">Nucleotide-binding</keyword>
<keyword id="KW-1185">Reference proteome</keyword>
<keyword id="KW-0808">Transferase</keyword>
<accession>Q6DI51</accession>
<proteinExistence type="evidence at transcript level"/>
<comment type="function">
    <text>Major role in the synthesis of nucleoside triphosphates other than ATP. The ATP gamma phosphate is transferred to the NDP beta phosphate via a ping-pong mechanism, using a phosphorylated active-site intermediate.</text>
</comment>
<comment type="catalytic activity">
    <reaction evidence="2">
        <text>a 2'-deoxyribonucleoside 5'-diphosphate + ATP = a 2'-deoxyribonucleoside 5'-triphosphate + ADP</text>
        <dbReference type="Rhea" id="RHEA:44640"/>
        <dbReference type="ChEBI" id="CHEBI:30616"/>
        <dbReference type="ChEBI" id="CHEBI:61560"/>
        <dbReference type="ChEBI" id="CHEBI:73316"/>
        <dbReference type="ChEBI" id="CHEBI:456216"/>
        <dbReference type="EC" id="2.7.4.6"/>
    </reaction>
</comment>
<comment type="catalytic activity">
    <reaction evidence="2">
        <text>a ribonucleoside 5'-diphosphate + ATP = a ribonucleoside 5'-triphosphate + ADP</text>
        <dbReference type="Rhea" id="RHEA:18113"/>
        <dbReference type="ChEBI" id="CHEBI:30616"/>
        <dbReference type="ChEBI" id="CHEBI:57930"/>
        <dbReference type="ChEBI" id="CHEBI:61557"/>
        <dbReference type="ChEBI" id="CHEBI:456216"/>
        <dbReference type="EC" id="2.7.4.6"/>
    </reaction>
</comment>
<comment type="cofactor">
    <cofactor evidence="1">
        <name>Mg(2+)</name>
        <dbReference type="ChEBI" id="CHEBI:18420"/>
    </cofactor>
</comment>
<comment type="similarity">
    <text evidence="3">Belongs to the NDK family.</text>
</comment>
<reference key="1">
    <citation type="journal article" date="2013" name="Nature">
        <title>The zebrafish reference genome sequence and its relationship to the human genome.</title>
        <authorList>
            <person name="Howe K."/>
            <person name="Clark M.D."/>
            <person name="Torroja C.F."/>
            <person name="Torrance J."/>
            <person name="Berthelot C."/>
            <person name="Muffato M."/>
            <person name="Collins J.E."/>
            <person name="Humphray S."/>
            <person name="McLaren K."/>
            <person name="Matthews L."/>
            <person name="McLaren S."/>
            <person name="Sealy I."/>
            <person name="Caccamo M."/>
            <person name="Churcher C."/>
            <person name="Scott C."/>
            <person name="Barrett J.C."/>
            <person name="Koch R."/>
            <person name="Rauch G.J."/>
            <person name="White S."/>
            <person name="Chow W."/>
            <person name="Kilian B."/>
            <person name="Quintais L.T."/>
            <person name="Guerra-Assuncao J.A."/>
            <person name="Zhou Y."/>
            <person name="Gu Y."/>
            <person name="Yen J."/>
            <person name="Vogel J.H."/>
            <person name="Eyre T."/>
            <person name="Redmond S."/>
            <person name="Banerjee R."/>
            <person name="Chi J."/>
            <person name="Fu B."/>
            <person name="Langley E."/>
            <person name="Maguire S.F."/>
            <person name="Laird G.K."/>
            <person name="Lloyd D."/>
            <person name="Kenyon E."/>
            <person name="Donaldson S."/>
            <person name="Sehra H."/>
            <person name="Almeida-King J."/>
            <person name="Loveland J."/>
            <person name="Trevanion S."/>
            <person name="Jones M."/>
            <person name="Quail M."/>
            <person name="Willey D."/>
            <person name="Hunt A."/>
            <person name="Burton J."/>
            <person name="Sims S."/>
            <person name="McLay K."/>
            <person name="Plumb B."/>
            <person name="Davis J."/>
            <person name="Clee C."/>
            <person name="Oliver K."/>
            <person name="Clark R."/>
            <person name="Riddle C."/>
            <person name="Elliot D."/>
            <person name="Threadgold G."/>
            <person name="Harden G."/>
            <person name="Ware D."/>
            <person name="Begum S."/>
            <person name="Mortimore B."/>
            <person name="Kerry G."/>
            <person name="Heath P."/>
            <person name="Phillimore B."/>
            <person name="Tracey A."/>
            <person name="Corby N."/>
            <person name="Dunn M."/>
            <person name="Johnson C."/>
            <person name="Wood J."/>
            <person name="Clark S."/>
            <person name="Pelan S."/>
            <person name="Griffiths G."/>
            <person name="Smith M."/>
            <person name="Glithero R."/>
            <person name="Howden P."/>
            <person name="Barker N."/>
            <person name="Lloyd C."/>
            <person name="Stevens C."/>
            <person name="Harley J."/>
            <person name="Holt K."/>
            <person name="Panagiotidis G."/>
            <person name="Lovell J."/>
            <person name="Beasley H."/>
            <person name="Henderson C."/>
            <person name="Gordon D."/>
            <person name="Auger K."/>
            <person name="Wright D."/>
            <person name="Collins J."/>
            <person name="Raisen C."/>
            <person name="Dyer L."/>
            <person name="Leung K."/>
            <person name="Robertson L."/>
            <person name="Ambridge K."/>
            <person name="Leongamornlert D."/>
            <person name="McGuire S."/>
            <person name="Gilderthorp R."/>
            <person name="Griffiths C."/>
            <person name="Manthravadi D."/>
            <person name="Nichol S."/>
            <person name="Barker G."/>
            <person name="Whitehead S."/>
            <person name="Kay M."/>
            <person name="Brown J."/>
            <person name="Murnane C."/>
            <person name="Gray E."/>
            <person name="Humphries M."/>
            <person name="Sycamore N."/>
            <person name="Barker D."/>
            <person name="Saunders D."/>
            <person name="Wallis J."/>
            <person name="Babbage A."/>
            <person name="Hammond S."/>
            <person name="Mashreghi-Mohammadi M."/>
            <person name="Barr L."/>
            <person name="Martin S."/>
            <person name="Wray P."/>
            <person name="Ellington A."/>
            <person name="Matthews N."/>
            <person name="Ellwood M."/>
            <person name="Woodmansey R."/>
            <person name="Clark G."/>
            <person name="Cooper J."/>
            <person name="Tromans A."/>
            <person name="Grafham D."/>
            <person name="Skuce C."/>
            <person name="Pandian R."/>
            <person name="Andrews R."/>
            <person name="Harrison E."/>
            <person name="Kimberley A."/>
            <person name="Garnett J."/>
            <person name="Fosker N."/>
            <person name="Hall R."/>
            <person name="Garner P."/>
            <person name="Kelly D."/>
            <person name="Bird C."/>
            <person name="Palmer S."/>
            <person name="Gehring I."/>
            <person name="Berger A."/>
            <person name="Dooley C.M."/>
            <person name="Ersan-Urun Z."/>
            <person name="Eser C."/>
            <person name="Geiger H."/>
            <person name="Geisler M."/>
            <person name="Karotki L."/>
            <person name="Kirn A."/>
            <person name="Konantz J."/>
            <person name="Konantz M."/>
            <person name="Oberlander M."/>
            <person name="Rudolph-Geiger S."/>
            <person name="Teucke M."/>
            <person name="Lanz C."/>
            <person name="Raddatz G."/>
            <person name="Osoegawa K."/>
            <person name="Zhu B."/>
            <person name="Rapp A."/>
            <person name="Widaa S."/>
            <person name="Langford C."/>
            <person name="Yang F."/>
            <person name="Schuster S.C."/>
            <person name="Carter N.P."/>
            <person name="Harrow J."/>
            <person name="Ning Z."/>
            <person name="Herrero J."/>
            <person name="Searle S.M."/>
            <person name="Enright A."/>
            <person name="Geisler R."/>
            <person name="Plasterk R.H."/>
            <person name="Lee C."/>
            <person name="Westerfield M."/>
            <person name="de Jong P.J."/>
            <person name="Zon L.I."/>
            <person name="Postlethwait J.H."/>
            <person name="Nusslein-Volhard C."/>
            <person name="Hubbard T.J."/>
            <person name="Roest Crollius H."/>
            <person name="Rogers J."/>
            <person name="Stemple D.L."/>
        </authorList>
    </citation>
    <scope>NUCLEOTIDE SEQUENCE [LARGE SCALE GENOMIC DNA]</scope>
    <source>
        <strain>Tuebingen</strain>
    </source>
</reference>
<reference key="2">
    <citation type="submission" date="2004-07" db="EMBL/GenBank/DDBJ databases">
        <authorList>
            <consortium name="NIH - Zebrafish Gene Collection (ZGC) project"/>
        </authorList>
    </citation>
    <scope>NUCLEOTIDE SEQUENCE [LARGE SCALE MRNA]</scope>
    <source>
        <tissue>Embryo</tissue>
    </source>
</reference>
<name>NDK6_DANRE</name>
<protein>
    <recommendedName>
        <fullName>Nucleoside diphosphate kinase 6</fullName>
        <shortName>NDK 6</shortName>
        <shortName>NDP kinase 6</shortName>
        <ecNumber>2.7.4.6</ecNumber>
    </recommendedName>
</protein>
<feature type="chain" id="PRO_0000369546" description="Nucleoside diphosphate kinase 6">
    <location>
        <begin position="1"/>
        <end position="175"/>
    </location>
</feature>
<feature type="active site" description="Pros-phosphohistidine intermediate" evidence="2">
    <location>
        <position position="124"/>
    </location>
</feature>
<feature type="binding site" evidence="1">
    <location>
        <position position="15"/>
    </location>
    <ligand>
        <name>ATP</name>
        <dbReference type="ChEBI" id="CHEBI:30616"/>
    </ligand>
</feature>
<feature type="binding site" evidence="1">
    <location>
        <position position="63"/>
    </location>
    <ligand>
        <name>ATP</name>
        <dbReference type="ChEBI" id="CHEBI:30616"/>
    </ligand>
</feature>
<feature type="binding site" evidence="1">
    <location>
        <position position="91"/>
    </location>
    <ligand>
        <name>ATP</name>
        <dbReference type="ChEBI" id="CHEBI:30616"/>
    </ligand>
</feature>
<feature type="binding site" evidence="1">
    <location>
        <position position="97"/>
    </location>
    <ligand>
        <name>ATP</name>
        <dbReference type="ChEBI" id="CHEBI:30616"/>
    </ligand>
</feature>
<feature type="binding site" evidence="1">
    <location>
        <position position="111"/>
    </location>
    <ligand>
        <name>ATP</name>
        <dbReference type="ChEBI" id="CHEBI:30616"/>
    </ligand>
</feature>
<feature type="binding site" evidence="1">
    <location>
        <position position="121"/>
    </location>
    <ligand>
        <name>ATP</name>
        <dbReference type="ChEBI" id="CHEBI:30616"/>
    </ligand>
</feature>
<evidence type="ECO:0000250" key="1"/>
<evidence type="ECO:0000255" key="2">
    <source>
        <dbReference type="PROSITE-ProRule" id="PRU10030"/>
    </source>
</evidence>
<evidence type="ECO:0000305" key="3"/>